<reference key="1">
    <citation type="submission" date="2007-09" db="EMBL/GenBank/DDBJ databases">
        <title>Complete genome sequence of Rickettsia canadensis.</title>
        <authorList>
            <person name="Madan A."/>
            <person name="Fahey J."/>
            <person name="Helton E."/>
            <person name="Ketteman M."/>
            <person name="Madan A."/>
            <person name="Rodrigues S."/>
            <person name="Sanchez A."/>
            <person name="Whiting M."/>
            <person name="Dasch G."/>
            <person name="Eremeeva M."/>
        </authorList>
    </citation>
    <scope>NUCLEOTIDE SEQUENCE [LARGE SCALE GENOMIC DNA]</scope>
    <source>
        <strain>McKiel</strain>
    </source>
</reference>
<name>ATPL_RICCK</name>
<evidence type="ECO:0000255" key="1">
    <source>
        <dbReference type="HAMAP-Rule" id="MF_01396"/>
    </source>
</evidence>
<feature type="chain" id="PRO_1000184451" description="ATP synthase subunit c">
    <location>
        <begin position="1"/>
        <end position="74"/>
    </location>
</feature>
<feature type="transmembrane region" description="Helical" evidence="1">
    <location>
        <begin position="8"/>
        <end position="28"/>
    </location>
</feature>
<feature type="transmembrane region" description="Helical" evidence="1">
    <location>
        <begin position="52"/>
        <end position="72"/>
    </location>
</feature>
<feature type="site" description="Reversibly protonated during proton transport" evidence="1">
    <location>
        <position position="58"/>
    </location>
</feature>
<accession>A8EX89</accession>
<gene>
    <name evidence="1" type="primary">atpE</name>
    <name type="ordered locus">A1E_00095</name>
</gene>
<keyword id="KW-0066">ATP synthesis</keyword>
<keyword id="KW-0997">Cell inner membrane</keyword>
<keyword id="KW-1003">Cell membrane</keyword>
<keyword id="KW-0138">CF(0)</keyword>
<keyword id="KW-0375">Hydrogen ion transport</keyword>
<keyword id="KW-0406">Ion transport</keyword>
<keyword id="KW-0446">Lipid-binding</keyword>
<keyword id="KW-0472">Membrane</keyword>
<keyword id="KW-0812">Transmembrane</keyword>
<keyword id="KW-1133">Transmembrane helix</keyword>
<keyword id="KW-0813">Transport</keyword>
<protein>
    <recommendedName>
        <fullName evidence="1">ATP synthase subunit c</fullName>
    </recommendedName>
    <alternativeName>
        <fullName evidence="1">ATP synthase F(0) sector subunit c</fullName>
    </alternativeName>
    <alternativeName>
        <fullName evidence="1">F-type ATPase subunit c</fullName>
        <shortName evidence="1">F-ATPase subunit c</shortName>
    </alternativeName>
    <alternativeName>
        <fullName evidence="1">Lipid-binding protein</fullName>
    </alternativeName>
</protein>
<comment type="function">
    <text evidence="1">F(1)F(0) ATP synthase produces ATP from ADP in the presence of a proton or sodium gradient. F-type ATPases consist of two structural domains, F(1) containing the extramembraneous catalytic core and F(0) containing the membrane proton channel, linked together by a central stalk and a peripheral stalk. During catalysis, ATP synthesis in the catalytic domain of F(1) is coupled via a rotary mechanism of the central stalk subunits to proton translocation.</text>
</comment>
<comment type="function">
    <text evidence="1">Key component of the F(0) channel; it plays a direct role in translocation across the membrane. A homomeric c-ring of between 10-14 subunits forms the central stalk rotor element with the F(1) delta and epsilon subunits.</text>
</comment>
<comment type="subunit">
    <text evidence="1">F-type ATPases have 2 components, F(1) - the catalytic core - and F(0) - the membrane proton channel. F(1) has five subunits: alpha(3), beta(3), gamma(1), delta(1), epsilon(1). F(0) has three main subunits: a(1), b(2) and c(10-14). The alpha and beta chains form an alternating ring which encloses part of the gamma chain. F(1) is attached to F(0) by a central stalk formed by the gamma and epsilon chains, while a peripheral stalk is formed by the delta and b chains.</text>
</comment>
<comment type="subcellular location">
    <subcellularLocation>
        <location evidence="1">Cell inner membrane</location>
        <topology evidence="1">Multi-pass membrane protein</topology>
    </subcellularLocation>
</comment>
<comment type="similarity">
    <text evidence="1">Belongs to the ATPase C chain family.</text>
</comment>
<sequence length="74" mass="7631">MDIVSLKFIGVGLMAIGMYGAALGVSNIFSSLLNAIARNPAAAENLQRMALIGAGLAEAIGLFSFVIAMLLIFS</sequence>
<proteinExistence type="inferred from homology"/>
<dbReference type="EMBL" id="CP000409">
    <property type="protein sequence ID" value="ABV72972.1"/>
    <property type="molecule type" value="Genomic_DNA"/>
</dbReference>
<dbReference type="RefSeq" id="WP_012148173.1">
    <property type="nucleotide sequence ID" value="NC_009879.1"/>
</dbReference>
<dbReference type="SMR" id="A8EX89"/>
<dbReference type="STRING" id="293613.A1E_00095"/>
<dbReference type="KEGG" id="rcm:A1E_00095"/>
<dbReference type="eggNOG" id="COG0636">
    <property type="taxonomic scope" value="Bacteria"/>
</dbReference>
<dbReference type="HOGENOM" id="CLU_148047_4_0_5"/>
<dbReference type="Proteomes" id="UP000007056">
    <property type="component" value="Chromosome"/>
</dbReference>
<dbReference type="GO" id="GO:0005886">
    <property type="term" value="C:plasma membrane"/>
    <property type="evidence" value="ECO:0007669"/>
    <property type="project" value="UniProtKB-SubCell"/>
</dbReference>
<dbReference type="GO" id="GO:0045259">
    <property type="term" value="C:proton-transporting ATP synthase complex"/>
    <property type="evidence" value="ECO:0007669"/>
    <property type="project" value="UniProtKB-KW"/>
</dbReference>
<dbReference type="GO" id="GO:0033177">
    <property type="term" value="C:proton-transporting two-sector ATPase complex, proton-transporting domain"/>
    <property type="evidence" value="ECO:0007669"/>
    <property type="project" value="InterPro"/>
</dbReference>
<dbReference type="GO" id="GO:0008289">
    <property type="term" value="F:lipid binding"/>
    <property type="evidence" value="ECO:0007669"/>
    <property type="project" value="UniProtKB-KW"/>
</dbReference>
<dbReference type="GO" id="GO:0046933">
    <property type="term" value="F:proton-transporting ATP synthase activity, rotational mechanism"/>
    <property type="evidence" value="ECO:0007669"/>
    <property type="project" value="UniProtKB-UniRule"/>
</dbReference>
<dbReference type="CDD" id="cd18182">
    <property type="entry name" value="ATP-synt_Fo_c_ATP5G3"/>
    <property type="match status" value="1"/>
</dbReference>
<dbReference type="Gene3D" id="1.20.20.10">
    <property type="entry name" value="F1F0 ATP synthase subunit C"/>
    <property type="match status" value="1"/>
</dbReference>
<dbReference type="HAMAP" id="MF_01396">
    <property type="entry name" value="ATP_synth_c_bact"/>
    <property type="match status" value="1"/>
</dbReference>
<dbReference type="InterPro" id="IPR000454">
    <property type="entry name" value="ATP_synth_F0_csu"/>
</dbReference>
<dbReference type="InterPro" id="IPR020537">
    <property type="entry name" value="ATP_synth_F0_csu_DDCD_BS"/>
</dbReference>
<dbReference type="InterPro" id="IPR038662">
    <property type="entry name" value="ATP_synth_F0_csu_sf"/>
</dbReference>
<dbReference type="InterPro" id="IPR002379">
    <property type="entry name" value="ATPase_proteolipid_c-like_dom"/>
</dbReference>
<dbReference type="InterPro" id="IPR035921">
    <property type="entry name" value="F/V-ATP_Csub_sf"/>
</dbReference>
<dbReference type="NCBIfam" id="NF005733">
    <property type="entry name" value="PRK07558.1"/>
    <property type="match status" value="1"/>
</dbReference>
<dbReference type="PANTHER" id="PTHR10031">
    <property type="entry name" value="ATP SYNTHASE LIPID-BINDING PROTEIN, MITOCHONDRIAL"/>
    <property type="match status" value="1"/>
</dbReference>
<dbReference type="PANTHER" id="PTHR10031:SF0">
    <property type="entry name" value="ATPASE PROTEIN 9"/>
    <property type="match status" value="1"/>
</dbReference>
<dbReference type="Pfam" id="PF00137">
    <property type="entry name" value="ATP-synt_C"/>
    <property type="match status" value="1"/>
</dbReference>
<dbReference type="PRINTS" id="PR00124">
    <property type="entry name" value="ATPASEC"/>
</dbReference>
<dbReference type="SUPFAM" id="SSF81333">
    <property type="entry name" value="F1F0 ATP synthase subunit C"/>
    <property type="match status" value="1"/>
</dbReference>
<dbReference type="PROSITE" id="PS00605">
    <property type="entry name" value="ATPASE_C"/>
    <property type="match status" value="1"/>
</dbReference>
<organism>
    <name type="scientific">Rickettsia canadensis (strain McKiel)</name>
    <dbReference type="NCBI Taxonomy" id="293613"/>
    <lineage>
        <taxon>Bacteria</taxon>
        <taxon>Pseudomonadati</taxon>
        <taxon>Pseudomonadota</taxon>
        <taxon>Alphaproteobacteria</taxon>
        <taxon>Rickettsiales</taxon>
        <taxon>Rickettsiaceae</taxon>
        <taxon>Rickettsieae</taxon>
        <taxon>Rickettsia</taxon>
        <taxon>belli group</taxon>
    </lineage>
</organism>